<proteinExistence type="inferred from homology"/>
<accession>Q73XV3</accession>
<gene>
    <name type="primary">mbtI</name>
    <name type="ordered locus">MAP_2205c</name>
</gene>
<evidence type="ECO:0000250" key="1">
    <source>
        <dbReference type="UniProtKB" id="P9WFX1"/>
    </source>
</evidence>
<evidence type="ECO:0000250" key="2">
    <source>
        <dbReference type="UniProtKB" id="Q9X9I8"/>
    </source>
</evidence>
<comment type="function">
    <text evidence="1">Involved in the incorporation of salicylate into the virulence-conferring salicylate-based siderophore mycobactin. Catalyzes the initial conversion of chorismate to yield the intermediate isochorismate (isochorismate synthase activity), and the subsequent elimination of the enolpyruvyl side chain in a lyase reaction to give salicylate (isochorismate pyruvate-lyase activity). In the absence of magnesium, MbtI displays a chorismate mutase activity and converts chorismate to prephenate.</text>
</comment>
<comment type="catalytic activity">
    <reaction evidence="1">
        <text>chorismate = isochorismate</text>
        <dbReference type="Rhea" id="RHEA:18985"/>
        <dbReference type="ChEBI" id="CHEBI:29748"/>
        <dbReference type="ChEBI" id="CHEBI:29780"/>
        <dbReference type="EC" id="5.4.4.2"/>
    </reaction>
</comment>
<comment type="catalytic activity">
    <reaction evidence="1">
        <text>isochorismate = salicylate + pyruvate</text>
        <dbReference type="Rhea" id="RHEA:27874"/>
        <dbReference type="ChEBI" id="CHEBI:15361"/>
        <dbReference type="ChEBI" id="CHEBI:29780"/>
        <dbReference type="ChEBI" id="CHEBI:30762"/>
        <dbReference type="EC" id="4.2.99.21"/>
    </reaction>
</comment>
<comment type="catalytic activity">
    <reaction evidence="1">
        <text>chorismate = prephenate</text>
        <dbReference type="Rhea" id="RHEA:13897"/>
        <dbReference type="ChEBI" id="CHEBI:29748"/>
        <dbReference type="ChEBI" id="CHEBI:29934"/>
        <dbReference type="EC" id="5.4.99.5"/>
    </reaction>
</comment>
<comment type="cofactor">
    <cofactor evidence="1">
        <name>Mg(2+)</name>
        <dbReference type="ChEBI" id="CHEBI:18420"/>
    </cofactor>
</comment>
<comment type="pathway">
    <text evidence="1">Siderophore biosynthesis; mycobactin biosynthesis.</text>
</comment>
<comment type="subunit">
    <text evidence="1">Monomer.</text>
</comment>
<comment type="similarity">
    <text evidence="1">Belongs to the anthranilate synthase component I family. Salicylate synthase subfamily.</text>
</comment>
<sequence>MTEVSVETTSAGSESPSIPLPVHIDPADLAAELAVVLSERAGEEYLLYERGGEWVLATGVRAMIELDSDELRVIRDGVTQRQHWSGRPGPVLGEAIDRLLLETDQLFGWIAFEFGVYRYGLQQRLAPGTALARVFWPNGRIVVTREAIQLFGTSTGRRDDVLGVLGDGVPGLRDASAVDVVTDPSNYRDRVASAVAEIAAGRYHKVILSRCLQVPFAVDFPSTYRLARRHNTPVRSFLLRLGGIRAVGYSPELVAAVRHDGVVVTEPLAGTRAFGRGALHDRQARDDLESNSKEIVEHAISVRSSLQEMAEIAEPGTAVVTDFMTVRERGSVQHLGSTVSGRLGTSNDRMDALEALFPAVTASGIPKAGGVEAILRLDEGPRGLYSGAVVMVSADGALDAALTLRAAYEHDGKTWLRAGAGIIEESTPEREFEETCEKLSTLAPYLIARQ</sequence>
<keyword id="KW-0413">Isomerase</keyword>
<keyword id="KW-0456">Lyase</keyword>
<keyword id="KW-0460">Magnesium</keyword>
<keyword id="KW-0479">Metal-binding</keyword>
<keyword id="KW-1185">Reference proteome</keyword>
<organism>
    <name type="scientific">Mycolicibacterium paratuberculosis (strain ATCC BAA-968 / K-10)</name>
    <name type="common">Mycobacterium paratuberculosis</name>
    <dbReference type="NCBI Taxonomy" id="262316"/>
    <lineage>
        <taxon>Bacteria</taxon>
        <taxon>Bacillati</taxon>
        <taxon>Actinomycetota</taxon>
        <taxon>Actinomycetes</taxon>
        <taxon>Mycobacteriales</taxon>
        <taxon>Mycobacteriaceae</taxon>
        <taxon>Mycobacterium</taxon>
        <taxon>Mycobacterium avium complex (MAC)</taxon>
    </lineage>
</organism>
<dbReference type="EC" id="5.4.99.5" evidence="1"/>
<dbReference type="EC" id="4.2.99.21" evidence="1"/>
<dbReference type="EC" id="5.4.4.2" evidence="1"/>
<dbReference type="EMBL" id="AE016958">
    <property type="protein sequence ID" value="AAS04522.1"/>
    <property type="molecule type" value="Genomic_DNA"/>
</dbReference>
<dbReference type="RefSeq" id="WP_003875926.1">
    <property type="nucleotide sequence ID" value="NZ_CP106873.1"/>
</dbReference>
<dbReference type="SMR" id="Q73XV3"/>
<dbReference type="STRING" id="262316.MAP_2205c"/>
<dbReference type="KEGG" id="mpa:MAP_2205c"/>
<dbReference type="eggNOG" id="COG1169">
    <property type="taxonomic scope" value="Bacteria"/>
</dbReference>
<dbReference type="HOGENOM" id="CLU_006493_2_1_11"/>
<dbReference type="UniPathway" id="UPA00011"/>
<dbReference type="Proteomes" id="UP000000580">
    <property type="component" value="Chromosome"/>
</dbReference>
<dbReference type="GO" id="GO:0004106">
    <property type="term" value="F:chorismate mutase activity"/>
    <property type="evidence" value="ECO:0000250"/>
    <property type="project" value="UniProtKB"/>
</dbReference>
<dbReference type="GO" id="GO:0043904">
    <property type="term" value="F:isochorismate pyruvate lyase activity"/>
    <property type="evidence" value="ECO:0000250"/>
    <property type="project" value="UniProtKB"/>
</dbReference>
<dbReference type="GO" id="GO:0008909">
    <property type="term" value="F:isochorismate synthase activity"/>
    <property type="evidence" value="ECO:0000250"/>
    <property type="project" value="UniProtKB"/>
</dbReference>
<dbReference type="GO" id="GO:0000287">
    <property type="term" value="F:magnesium ion binding"/>
    <property type="evidence" value="ECO:0000250"/>
    <property type="project" value="UniProtKB"/>
</dbReference>
<dbReference type="GO" id="GO:0016833">
    <property type="term" value="F:oxo-acid-lyase activity"/>
    <property type="evidence" value="ECO:0007669"/>
    <property type="project" value="InterPro"/>
</dbReference>
<dbReference type="GO" id="GO:0019540">
    <property type="term" value="P:catechol-containing siderophore biosynthetic process"/>
    <property type="evidence" value="ECO:0000250"/>
    <property type="project" value="UniProtKB"/>
</dbReference>
<dbReference type="GO" id="GO:0000162">
    <property type="term" value="P:L-tryptophan biosynthetic process"/>
    <property type="evidence" value="ECO:0007669"/>
    <property type="project" value="TreeGrafter"/>
</dbReference>
<dbReference type="GO" id="GO:0009697">
    <property type="term" value="P:salicylic acid biosynthetic process"/>
    <property type="evidence" value="ECO:0000250"/>
    <property type="project" value="UniProtKB"/>
</dbReference>
<dbReference type="Gene3D" id="3.60.120.10">
    <property type="entry name" value="Anthranilate synthase"/>
    <property type="match status" value="1"/>
</dbReference>
<dbReference type="InterPro" id="IPR005801">
    <property type="entry name" value="ADC_synthase"/>
</dbReference>
<dbReference type="InterPro" id="IPR019999">
    <property type="entry name" value="Anth_synth_I-like"/>
</dbReference>
<dbReference type="InterPro" id="IPR015890">
    <property type="entry name" value="Chorismate_C"/>
</dbReference>
<dbReference type="InterPro" id="IPR019996">
    <property type="entry name" value="Salicylate_synthase"/>
</dbReference>
<dbReference type="NCBIfam" id="TIGR03494">
    <property type="entry name" value="salicyl_syn"/>
    <property type="match status" value="1"/>
</dbReference>
<dbReference type="PANTHER" id="PTHR11236">
    <property type="entry name" value="AMINOBENZOATE/ANTHRANILATE SYNTHASE"/>
    <property type="match status" value="1"/>
</dbReference>
<dbReference type="PANTHER" id="PTHR11236:SF48">
    <property type="entry name" value="ISOCHORISMATE SYNTHASE MENF"/>
    <property type="match status" value="1"/>
</dbReference>
<dbReference type="Pfam" id="PF00425">
    <property type="entry name" value="Chorismate_bind"/>
    <property type="match status" value="1"/>
</dbReference>
<dbReference type="PRINTS" id="PR00095">
    <property type="entry name" value="ANTSNTHASEI"/>
</dbReference>
<dbReference type="SUPFAM" id="SSF56322">
    <property type="entry name" value="ADC synthase"/>
    <property type="match status" value="1"/>
</dbReference>
<feature type="chain" id="PRO_0000262085" description="Salicylate synthase">
    <location>
        <begin position="1"/>
        <end position="450"/>
    </location>
</feature>
<feature type="active site" description="Proton donor" evidence="2">
    <location>
        <position position="252"/>
    </location>
</feature>
<feature type="binding site" evidence="1">
    <location>
        <begin position="270"/>
        <end position="271"/>
    </location>
    <ligand>
        <name>substrate</name>
    </ligand>
</feature>
<feature type="binding site" evidence="1">
    <location>
        <position position="297"/>
    </location>
    <ligand>
        <name>Mg(2+)</name>
        <dbReference type="ChEBI" id="CHEBI:18420"/>
    </ligand>
</feature>
<feature type="binding site" evidence="1">
    <location>
        <position position="385"/>
    </location>
    <ligand>
        <name>substrate</name>
    </ligand>
</feature>
<feature type="binding site" evidence="1">
    <location>
        <position position="405"/>
    </location>
    <ligand>
        <name>substrate</name>
    </ligand>
</feature>
<feature type="binding site" evidence="1">
    <location>
        <begin position="419"/>
        <end position="421"/>
    </location>
    <ligand>
        <name>substrate</name>
    </ligand>
</feature>
<feature type="binding site" evidence="1">
    <location>
        <position position="431"/>
    </location>
    <ligand>
        <name>Mg(2+)</name>
        <dbReference type="ChEBI" id="CHEBI:18420"/>
    </ligand>
</feature>
<feature type="binding site" evidence="1">
    <location>
        <position position="434"/>
    </location>
    <ligand>
        <name>Mg(2+)</name>
        <dbReference type="ChEBI" id="CHEBI:18420"/>
    </ligand>
</feature>
<feature type="binding site" evidence="1">
    <location>
        <position position="438"/>
    </location>
    <ligand>
        <name>substrate</name>
    </ligand>
</feature>
<protein>
    <recommendedName>
        <fullName evidence="1">Salicylate synthase</fullName>
    </recommendedName>
    <alternativeName>
        <fullName evidence="1">Chorismate mutase</fullName>
        <shortName evidence="1">CM</shortName>
        <ecNumber evidence="1">5.4.99.5</ecNumber>
    </alternativeName>
    <alternativeName>
        <fullName evidence="1">Isochorismate synthase/isochorismate lyase</fullName>
        <ecNumber evidence="1">4.2.99.21</ecNumber>
        <ecNumber evidence="1">5.4.4.2</ecNumber>
    </alternativeName>
    <alternativeName>
        <fullName evidence="1">Mycobactin synthase protein</fullName>
    </alternativeName>
</protein>
<name>MBTI_MYCPA</name>
<reference key="1">
    <citation type="journal article" date="2005" name="Proc. Natl. Acad. Sci. U.S.A.">
        <title>The complete genome sequence of Mycobacterium avium subspecies paratuberculosis.</title>
        <authorList>
            <person name="Li L."/>
            <person name="Bannantine J.P."/>
            <person name="Zhang Q."/>
            <person name="Amonsin A."/>
            <person name="May B.J."/>
            <person name="Alt D."/>
            <person name="Banerji N."/>
            <person name="Kanjilal S."/>
            <person name="Kapur V."/>
        </authorList>
    </citation>
    <scope>NUCLEOTIDE SEQUENCE [LARGE SCALE GENOMIC DNA]</scope>
    <source>
        <strain>ATCC BAA-968 / K-10</strain>
    </source>
</reference>